<organism>
    <name type="scientific">Francisella tularensis subsp. holarctica (strain FTNF002-00 / FTA)</name>
    <dbReference type="NCBI Taxonomy" id="458234"/>
    <lineage>
        <taxon>Bacteria</taxon>
        <taxon>Pseudomonadati</taxon>
        <taxon>Pseudomonadota</taxon>
        <taxon>Gammaproteobacteria</taxon>
        <taxon>Thiotrichales</taxon>
        <taxon>Francisellaceae</taxon>
        <taxon>Francisella</taxon>
    </lineage>
</organism>
<name>MRAY_FRATF</name>
<dbReference type="EC" id="2.7.8.13" evidence="1"/>
<dbReference type="EMBL" id="CP000803">
    <property type="protein sequence ID" value="ABU62178.1"/>
    <property type="molecule type" value="Genomic_DNA"/>
</dbReference>
<dbReference type="RefSeq" id="WP_003017012.1">
    <property type="nucleotide sequence ID" value="NC_009749.1"/>
</dbReference>
<dbReference type="SMR" id="A7NDX5"/>
<dbReference type="KEGG" id="fta:FTA_1703"/>
<dbReference type="HOGENOM" id="CLU_023982_0_0_6"/>
<dbReference type="UniPathway" id="UPA00219"/>
<dbReference type="GO" id="GO:0005886">
    <property type="term" value="C:plasma membrane"/>
    <property type="evidence" value="ECO:0007669"/>
    <property type="project" value="UniProtKB-SubCell"/>
</dbReference>
<dbReference type="GO" id="GO:0046872">
    <property type="term" value="F:metal ion binding"/>
    <property type="evidence" value="ECO:0007669"/>
    <property type="project" value="UniProtKB-KW"/>
</dbReference>
<dbReference type="GO" id="GO:0008963">
    <property type="term" value="F:phospho-N-acetylmuramoyl-pentapeptide-transferase activity"/>
    <property type="evidence" value="ECO:0007669"/>
    <property type="project" value="UniProtKB-UniRule"/>
</dbReference>
<dbReference type="GO" id="GO:0051992">
    <property type="term" value="F:UDP-N-acetylmuramoyl-L-alanyl-D-glutamyl-meso-2,6-diaminopimelyl-D-alanyl-D-alanine:undecaprenyl-phosphate transferase activity"/>
    <property type="evidence" value="ECO:0007669"/>
    <property type="project" value="RHEA"/>
</dbReference>
<dbReference type="GO" id="GO:0051301">
    <property type="term" value="P:cell division"/>
    <property type="evidence" value="ECO:0007669"/>
    <property type="project" value="UniProtKB-KW"/>
</dbReference>
<dbReference type="GO" id="GO:0071555">
    <property type="term" value="P:cell wall organization"/>
    <property type="evidence" value="ECO:0007669"/>
    <property type="project" value="UniProtKB-KW"/>
</dbReference>
<dbReference type="GO" id="GO:0009252">
    <property type="term" value="P:peptidoglycan biosynthetic process"/>
    <property type="evidence" value="ECO:0007669"/>
    <property type="project" value="UniProtKB-UniRule"/>
</dbReference>
<dbReference type="GO" id="GO:0008360">
    <property type="term" value="P:regulation of cell shape"/>
    <property type="evidence" value="ECO:0007669"/>
    <property type="project" value="UniProtKB-KW"/>
</dbReference>
<dbReference type="CDD" id="cd06852">
    <property type="entry name" value="GT_MraY"/>
    <property type="match status" value="1"/>
</dbReference>
<dbReference type="HAMAP" id="MF_00038">
    <property type="entry name" value="MraY"/>
    <property type="match status" value="1"/>
</dbReference>
<dbReference type="InterPro" id="IPR000715">
    <property type="entry name" value="Glycosyl_transferase_4"/>
</dbReference>
<dbReference type="InterPro" id="IPR003524">
    <property type="entry name" value="PNAcMuramoyl-5peptid_Trfase"/>
</dbReference>
<dbReference type="InterPro" id="IPR018480">
    <property type="entry name" value="PNAcMuramoyl-5peptid_Trfase_CS"/>
</dbReference>
<dbReference type="NCBIfam" id="TIGR00445">
    <property type="entry name" value="mraY"/>
    <property type="match status" value="1"/>
</dbReference>
<dbReference type="PANTHER" id="PTHR22926">
    <property type="entry name" value="PHOSPHO-N-ACETYLMURAMOYL-PENTAPEPTIDE-TRANSFERASE"/>
    <property type="match status" value="1"/>
</dbReference>
<dbReference type="PANTHER" id="PTHR22926:SF5">
    <property type="entry name" value="PHOSPHO-N-ACETYLMURAMOYL-PENTAPEPTIDE-TRANSFERASE HOMOLOG"/>
    <property type="match status" value="1"/>
</dbReference>
<dbReference type="Pfam" id="PF00953">
    <property type="entry name" value="Glycos_transf_4"/>
    <property type="match status" value="1"/>
</dbReference>
<dbReference type="Pfam" id="PF10555">
    <property type="entry name" value="MraY_sig1"/>
    <property type="match status" value="1"/>
</dbReference>
<dbReference type="PROSITE" id="PS01347">
    <property type="entry name" value="MRAY_1"/>
    <property type="match status" value="1"/>
</dbReference>
<dbReference type="PROSITE" id="PS01348">
    <property type="entry name" value="MRAY_2"/>
    <property type="match status" value="1"/>
</dbReference>
<proteinExistence type="inferred from homology"/>
<sequence length="365" mass="40527">MLIYLFEWLSHYFKGLEVFSSYISVRIIMISITSLLITLALGRPMISWLQKMQIGQIVRDDGPQSHFSKRNTPTMGGVLILSSVIISCLLWGNLTSIYLWILILVVIFFGAIGFFDDYLKLVLKHPKGLRAKHKFALQSIFSIVLAIVLFYLLSKNGQMSLSIPFSKSLYIPMGIVIFVVLAFFIINGSSNAVNLTDGLDGLAIVPVVLVAAGLGIYAYIETNSTLANYLLFNYLGNPGLAEVAVFCAAVCGSGLAFLWFNSHPAEVFMGDVGSLTLGAVLGVIAVMVRQELIFFIMGLLFVVEALSVMLQVGSYKLRNGKRIFRMAPIHHHFELKGWPETKVVIRFWIISLILFLIGFAAIKVR</sequence>
<comment type="function">
    <text evidence="1">Catalyzes the initial step of the lipid cycle reactions in the biosynthesis of the cell wall peptidoglycan: transfers peptidoglycan precursor phospho-MurNAc-pentapeptide from UDP-MurNAc-pentapeptide onto the lipid carrier undecaprenyl phosphate, yielding undecaprenyl-pyrophosphoryl-MurNAc-pentapeptide, known as lipid I.</text>
</comment>
<comment type="catalytic activity">
    <reaction evidence="1">
        <text>UDP-N-acetyl-alpha-D-muramoyl-L-alanyl-gamma-D-glutamyl-meso-2,6-diaminopimeloyl-D-alanyl-D-alanine + di-trans,octa-cis-undecaprenyl phosphate = di-trans,octa-cis-undecaprenyl diphospho-N-acetyl-alpha-D-muramoyl-L-alanyl-D-glutamyl-meso-2,6-diaminopimeloyl-D-alanyl-D-alanine + UMP</text>
        <dbReference type="Rhea" id="RHEA:28386"/>
        <dbReference type="ChEBI" id="CHEBI:57865"/>
        <dbReference type="ChEBI" id="CHEBI:60392"/>
        <dbReference type="ChEBI" id="CHEBI:61386"/>
        <dbReference type="ChEBI" id="CHEBI:61387"/>
        <dbReference type="EC" id="2.7.8.13"/>
    </reaction>
</comment>
<comment type="cofactor">
    <cofactor evidence="1">
        <name>Mg(2+)</name>
        <dbReference type="ChEBI" id="CHEBI:18420"/>
    </cofactor>
</comment>
<comment type="pathway">
    <text evidence="1">Cell wall biogenesis; peptidoglycan biosynthesis.</text>
</comment>
<comment type="subcellular location">
    <subcellularLocation>
        <location evidence="1">Cell inner membrane</location>
        <topology evidence="1">Multi-pass membrane protein</topology>
    </subcellularLocation>
</comment>
<comment type="similarity">
    <text evidence="1">Belongs to the glycosyltransferase 4 family. MraY subfamily.</text>
</comment>
<evidence type="ECO:0000255" key="1">
    <source>
        <dbReference type="HAMAP-Rule" id="MF_00038"/>
    </source>
</evidence>
<accession>A7NDX5</accession>
<feature type="chain" id="PRO_1000002977" description="Phospho-N-acetylmuramoyl-pentapeptide-transferase">
    <location>
        <begin position="1"/>
        <end position="365"/>
    </location>
</feature>
<feature type="transmembrane region" description="Helical" evidence="1">
    <location>
        <begin position="22"/>
        <end position="42"/>
    </location>
</feature>
<feature type="transmembrane region" description="Helical" evidence="1">
    <location>
        <begin position="74"/>
        <end position="94"/>
    </location>
</feature>
<feature type="transmembrane region" description="Helical" evidence="1">
    <location>
        <begin position="95"/>
        <end position="115"/>
    </location>
</feature>
<feature type="transmembrane region" description="Helical" evidence="1">
    <location>
        <begin position="134"/>
        <end position="154"/>
    </location>
</feature>
<feature type="transmembrane region" description="Helical" evidence="1">
    <location>
        <begin position="168"/>
        <end position="188"/>
    </location>
</feature>
<feature type="transmembrane region" description="Helical" evidence="1">
    <location>
        <begin position="201"/>
        <end position="221"/>
    </location>
</feature>
<feature type="transmembrane region" description="Helical" evidence="1">
    <location>
        <begin position="240"/>
        <end position="260"/>
    </location>
</feature>
<feature type="transmembrane region" description="Helical" evidence="1">
    <location>
        <begin position="267"/>
        <end position="287"/>
    </location>
</feature>
<feature type="transmembrane region" description="Helical" evidence="1">
    <location>
        <begin position="292"/>
        <end position="312"/>
    </location>
</feature>
<feature type="transmembrane region" description="Helical" evidence="1">
    <location>
        <begin position="342"/>
        <end position="362"/>
    </location>
</feature>
<gene>
    <name evidence="1" type="primary">mraY</name>
    <name type="ordered locus">FTA_1703</name>
</gene>
<keyword id="KW-0131">Cell cycle</keyword>
<keyword id="KW-0132">Cell division</keyword>
<keyword id="KW-0997">Cell inner membrane</keyword>
<keyword id="KW-1003">Cell membrane</keyword>
<keyword id="KW-0133">Cell shape</keyword>
<keyword id="KW-0961">Cell wall biogenesis/degradation</keyword>
<keyword id="KW-0460">Magnesium</keyword>
<keyword id="KW-0472">Membrane</keyword>
<keyword id="KW-0479">Metal-binding</keyword>
<keyword id="KW-0573">Peptidoglycan synthesis</keyword>
<keyword id="KW-0808">Transferase</keyword>
<keyword id="KW-0812">Transmembrane</keyword>
<keyword id="KW-1133">Transmembrane helix</keyword>
<reference key="1">
    <citation type="journal article" date="2009" name="PLoS ONE">
        <title>Complete genome sequence of Francisella tularensis subspecies holarctica FTNF002-00.</title>
        <authorList>
            <person name="Barabote R.D."/>
            <person name="Xie G."/>
            <person name="Brettin T.S."/>
            <person name="Hinrichs S.H."/>
            <person name="Fey P.D."/>
            <person name="Jay J.J."/>
            <person name="Engle J.L."/>
            <person name="Godbole S.D."/>
            <person name="Noronha J.M."/>
            <person name="Scheuermann R.H."/>
            <person name="Zhou L.W."/>
            <person name="Lion C."/>
            <person name="Dempsey M.P."/>
        </authorList>
    </citation>
    <scope>NUCLEOTIDE SEQUENCE [LARGE SCALE GENOMIC DNA]</scope>
    <source>
        <strain>FTNF002-00 / FTA</strain>
    </source>
</reference>
<protein>
    <recommendedName>
        <fullName evidence="1">Phospho-N-acetylmuramoyl-pentapeptide-transferase</fullName>
        <ecNumber evidence="1">2.7.8.13</ecNumber>
    </recommendedName>
    <alternativeName>
        <fullName evidence="1">UDP-MurNAc-pentapeptide phosphotransferase</fullName>
    </alternativeName>
</protein>